<reference key="1">
    <citation type="journal article" date="1997" name="J. Bacteriol.">
        <title>Complete genome sequence of Methanobacterium thermoautotrophicum deltaH: functional analysis and comparative genomics.</title>
        <authorList>
            <person name="Smith D.R."/>
            <person name="Doucette-Stamm L.A."/>
            <person name="Deloughery C."/>
            <person name="Lee H.-M."/>
            <person name="Dubois J."/>
            <person name="Aldredge T."/>
            <person name="Bashirzadeh R."/>
            <person name="Blakely D."/>
            <person name="Cook R."/>
            <person name="Gilbert K."/>
            <person name="Harrison D."/>
            <person name="Hoang L."/>
            <person name="Keagle P."/>
            <person name="Lumm W."/>
            <person name="Pothier B."/>
            <person name="Qiu D."/>
            <person name="Spadafora R."/>
            <person name="Vicare R."/>
            <person name="Wang Y."/>
            <person name="Wierzbowski J."/>
            <person name="Gibson R."/>
            <person name="Jiwani N."/>
            <person name="Caruso A."/>
            <person name="Bush D."/>
            <person name="Safer H."/>
            <person name="Patwell D."/>
            <person name="Prabhakar S."/>
            <person name="McDougall S."/>
            <person name="Shimer G."/>
            <person name="Goyal A."/>
            <person name="Pietrovski S."/>
            <person name="Church G.M."/>
            <person name="Daniels C.J."/>
            <person name="Mao J.-I."/>
            <person name="Rice P."/>
            <person name="Noelling J."/>
            <person name="Reeve J.N."/>
        </authorList>
    </citation>
    <scope>NUCLEOTIDE SEQUENCE [LARGE SCALE GENOMIC DNA]</scope>
    <source>
        <strain>ATCC 29096 / DSM 1053 / JCM 10044 / NBRC 100330 / Delta H</strain>
    </source>
</reference>
<feature type="chain" id="PRO_0000107406" description="Uncharacterized protein MTH_1128">
    <location>
        <begin position="1"/>
        <end position="64"/>
    </location>
</feature>
<keyword id="KW-1185">Reference proteome</keyword>
<protein>
    <recommendedName>
        <fullName>Uncharacterized protein MTH_1128</fullName>
    </recommendedName>
</protein>
<dbReference type="EMBL" id="AE000666">
    <property type="protein sequence ID" value="AAB85617.1"/>
    <property type="molecule type" value="Genomic_DNA"/>
</dbReference>
<dbReference type="PIR" id="B69017">
    <property type="entry name" value="B69017"/>
</dbReference>
<dbReference type="SMR" id="O27200"/>
<dbReference type="STRING" id="187420.MTH_1128"/>
<dbReference type="PaxDb" id="187420-MTH_1128"/>
<dbReference type="EnsemblBacteria" id="AAB85617">
    <property type="protein sequence ID" value="AAB85617"/>
    <property type="gene ID" value="MTH_1128"/>
</dbReference>
<dbReference type="KEGG" id="mth:MTH_1128"/>
<dbReference type="HOGENOM" id="CLU_200895_2_0_2"/>
<dbReference type="InParanoid" id="O27200"/>
<dbReference type="Proteomes" id="UP000005223">
    <property type="component" value="Chromosome"/>
</dbReference>
<dbReference type="InterPro" id="IPR019300">
    <property type="entry name" value="CooT"/>
</dbReference>
<dbReference type="Pfam" id="PF10133">
    <property type="entry name" value="CooT"/>
    <property type="match status" value="1"/>
</dbReference>
<organism>
    <name type="scientific">Methanothermobacter thermautotrophicus (strain ATCC 29096 / DSM 1053 / JCM 10044 / NBRC 100330 / Delta H)</name>
    <name type="common">Methanobacterium thermoautotrophicum</name>
    <dbReference type="NCBI Taxonomy" id="187420"/>
    <lineage>
        <taxon>Archaea</taxon>
        <taxon>Methanobacteriati</taxon>
        <taxon>Methanobacteriota</taxon>
        <taxon>Methanomada group</taxon>
        <taxon>Methanobacteria</taxon>
        <taxon>Methanobacteriales</taxon>
        <taxon>Methanobacteriaceae</taxon>
        <taxon>Methanothermobacter</taxon>
    </lineage>
</organism>
<gene>
    <name type="ordered locus">MTH_1128</name>
</gene>
<accession>O27200</accession>
<proteinExistence type="predicted"/>
<sequence>MVKHMCESNLYSEGGDLLMEDVIFIEVLEDGIRATDILDSQKEFPGKLTRIDLDKHRIYIETED</sequence>
<name>Y1128_METTH</name>